<protein>
    <recommendedName>
        <fullName evidence="1">DNA polymerase IV</fullName>
        <shortName evidence="1">Pol IV</shortName>
        <ecNumber evidence="1">2.7.7.7</ecNumber>
    </recommendedName>
</protein>
<keyword id="KW-0963">Cytoplasm</keyword>
<keyword id="KW-0227">DNA damage</keyword>
<keyword id="KW-0234">DNA repair</keyword>
<keyword id="KW-0235">DNA replication</keyword>
<keyword id="KW-0238">DNA-binding</keyword>
<keyword id="KW-0239">DNA-directed DNA polymerase</keyword>
<keyword id="KW-0460">Magnesium</keyword>
<keyword id="KW-0479">Metal-binding</keyword>
<keyword id="KW-0515">Mutator protein</keyword>
<keyword id="KW-0548">Nucleotidyltransferase</keyword>
<keyword id="KW-0808">Transferase</keyword>
<accession>A7NC07</accession>
<gene>
    <name evidence="1" type="primary">dinB</name>
    <name type="ordered locus">FTA_1034</name>
</gene>
<name>DPO4_FRATF</name>
<comment type="function">
    <text evidence="1">Poorly processive, error-prone DNA polymerase involved in untargeted mutagenesis. Copies undamaged DNA at stalled replication forks, which arise in vivo from mismatched or misaligned primer ends. These misaligned primers can be extended by PolIV. Exhibits no 3'-5' exonuclease (proofreading) activity. May be involved in translesional synthesis, in conjunction with the beta clamp from PolIII.</text>
</comment>
<comment type="catalytic activity">
    <reaction evidence="1">
        <text>DNA(n) + a 2'-deoxyribonucleoside 5'-triphosphate = DNA(n+1) + diphosphate</text>
        <dbReference type="Rhea" id="RHEA:22508"/>
        <dbReference type="Rhea" id="RHEA-COMP:17339"/>
        <dbReference type="Rhea" id="RHEA-COMP:17340"/>
        <dbReference type="ChEBI" id="CHEBI:33019"/>
        <dbReference type="ChEBI" id="CHEBI:61560"/>
        <dbReference type="ChEBI" id="CHEBI:173112"/>
        <dbReference type="EC" id="2.7.7.7"/>
    </reaction>
</comment>
<comment type="cofactor">
    <cofactor evidence="1">
        <name>Mg(2+)</name>
        <dbReference type="ChEBI" id="CHEBI:18420"/>
    </cofactor>
    <text evidence="1">Binds 2 magnesium ions per subunit.</text>
</comment>
<comment type="subunit">
    <text evidence="1">Monomer.</text>
</comment>
<comment type="subcellular location">
    <subcellularLocation>
        <location evidence="1">Cytoplasm</location>
    </subcellularLocation>
</comment>
<comment type="similarity">
    <text evidence="1">Belongs to the DNA polymerase type-Y family.</text>
</comment>
<sequence length="349" mass="39085">MTKLRKIIHIDMDYFFAQVEEKANPSLKDKPFAVGGTNPKRGVISTCNYIAREYGVRSAMPTAIAMQKCPNLILLNTDFAKYKAASAVIRDIFYSFTDKVEPLSLDEAYLDVTDVKEYKNSATLIAQAIKQEIFNKTGLTGSAGVAPNKLLAKIASDINKPNGLYVVTPKQVDSFVKDLPVKKLFGVGKVSQEKLKSMGVETCLDLQQLSLATLVDKFGKFGSSLYNYARGIDNREVNPVRIRKSVSVENTYLEDLKTLGACLEKLPSLYDKLTSRMTEEHYKSIIGIVVKFTDTKFNKTSLTRVAKILDKEMLKNLIIELHQKRNHPIRLIGIGVKLGEIDDKQMDLF</sequence>
<evidence type="ECO:0000255" key="1">
    <source>
        <dbReference type="HAMAP-Rule" id="MF_01113"/>
    </source>
</evidence>
<feature type="chain" id="PRO_1000137131" description="DNA polymerase IV">
    <location>
        <begin position="1"/>
        <end position="349"/>
    </location>
</feature>
<feature type="domain" description="UmuC" evidence="1">
    <location>
        <begin position="7"/>
        <end position="188"/>
    </location>
</feature>
<feature type="active site" evidence="1">
    <location>
        <position position="107"/>
    </location>
</feature>
<feature type="binding site" evidence="1">
    <location>
        <position position="11"/>
    </location>
    <ligand>
        <name>Mg(2+)</name>
        <dbReference type="ChEBI" id="CHEBI:18420"/>
    </ligand>
</feature>
<feature type="binding site" evidence="1">
    <location>
        <position position="106"/>
    </location>
    <ligand>
        <name>Mg(2+)</name>
        <dbReference type="ChEBI" id="CHEBI:18420"/>
    </ligand>
</feature>
<feature type="site" description="Substrate discrimination" evidence="1">
    <location>
        <position position="16"/>
    </location>
</feature>
<reference key="1">
    <citation type="journal article" date="2009" name="PLoS ONE">
        <title>Complete genome sequence of Francisella tularensis subspecies holarctica FTNF002-00.</title>
        <authorList>
            <person name="Barabote R.D."/>
            <person name="Xie G."/>
            <person name="Brettin T.S."/>
            <person name="Hinrichs S.H."/>
            <person name="Fey P.D."/>
            <person name="Jay J.J."/>
            <person name="Engle J.L."/>
            <person name="Godbole S.D."/>
            <person name="Noronha J.M."/>
            <person name="Scheuermann R.H."/>
            <person name="Zhou L.W."/>
            <person name="Lion C."/>
            <person name="Dempsey M.P."/>
        </authorList>
    </citation>
    <scope>NUCLEOTIDE SEQUENCE [LARGE SCALE GENOMIC DNA]</scope>
    <source>
        <strain>FTNF002-00 / FTA</strain>
    </source>
</reference>
<organism>
    <name type="scientific">Francisella tularensis subsp. holarctica (strain FTNF002-00 / FTA)</name>
    <dbReference type="NCBI Taxonomy" id="458234"/>
    <lineage>
        <taxon>Bacteria</taxon>
        <taxon>Pseudomonadati</taxon>
        <taxon>Pseudomonadota</taxon>
        <taxon>Gammaproteobacteria</taxon>
        <taxon>Thiotrichales</taxon>
        <taxon>Francisellaceae</taxon>
        <taxon>Francisella</taxon>
    </lineage>
</organism>
<dbReference type="EC" id="2.7.7.7" evidence="1"/>
<dbReference type="EMBL" id="CP000803">
    <property type="protein sequence ID" value="ABU61510.1"/>
    <property type="molecule type" value="Genomic_DNA"/>
</dbReference>
<dbReference type="RefSeq" id="WP_003015811.1">
    <property type="nucleotide sequence ID" value="NC_009749.1"/>
</dbReference>
<dbReference type="SMR" id="A7NC07"/>
<dbReference type="KEGG" id="fta:FTA_1034"/>
<dbReference type="HOGENOM" id="CLU_012348_1_2_6"/>
<dbReference type="GO" id="GO:0005829">
    <property type="term" value="C:cytosol"/>
    <property type="evidence" value="ECO:0007669"/>
    <property type="project" value="TreeGrafter"/>
</dbReference>
<dbReference type="GO" id="GO:0003684">
    <property type="term" value="F:damaged DNA binding"/>
    <property type="evidence" value="ECO:0007669"/>
    <property type="project" value="InterPro"/>
</dbReference>
<dbReference type="GO" id="GO:0003887">
    <property type="term" value="F:DNA-directed DNA polymerase activity"/>
    <property type="evidence" value="ECO:0007669"/>
    <property type="project" value="UniProtKB-UniRule"/>
</dbReference>
<dbReference type="GO" id="GO:0000287">
    <property type="term" value="F:magnesium ion binding"/>
    <property type="evidence" value="ECO:0007669"/>
    <property type="project" value="UniProtKB-UniRule"/>
</dbReference>
<dbReference type="GO" id="GO:0006261">
    <property type="term" value="P:DNA-templated DNA replication"/>
    <property type="evidence" value="ECO:0007669"/>
    <property type="project" value="UniProtKB-UniRule"/>
</dbReference>
<dbReference type="GO" id="GO:0042276">
    <property type="term" value="P:error-prone translesion synthesis"/>
    <property type="evidence" value="ECO:0007669"/>
    <property type="project" value="TreeGrafter"/>
</dbReference>
<dbReference type="GO" id="GO:0009432">
    <property type="term" value="P:SOS response"/>
    <property type="evidence" value="ECO:0007669"/>
    <property type="project" value="TreeGrafter"/>
</dbReference>
<dbReference type="CDD" id="cd03586">
    <property type="entry name" value="PolY_Pol_IV_kappa"/>
    <property type="match status" value="1"/>
</dbReference>
<dbReference type="FunFam" id="1.10.150.20:FF:000019">
    <property type="entry name" value="DNA polymerase IV"/>
    <property type="match status" value="1"/>
</dbReference>
<dbReference type="FunFam" id="3.40.1170.60:FF:000001">
    <property type="entry name" value="DNA polymerase IV"/>
    <property type="match status" value="1"/>
</dbReference>
<dbReference type="Gene3D" id="3.30.70.270">
    <property type="match status" value="1"/>
</dbReference>
<dbReference type="Gene3D" id="3.40.1170.60">
    <property type="match status" value="1"/>
</dbReference>
<dbReference type="Gene3D" id="1.10.150.20">
    <property type="entry name" value="5' to 3' exonuclease, C-terminal subdomain"/>
    <property type="match status" value="1"/>
</dbReference>
<dbReference type="Gene3D" id="3.30.1490.100">
    <property type="entry name" value="DNA polymerase, Y-family, little finger domain"/>
    <property type="match status" value="1"/>
</dbReference>
<dbReference type="HAMAP" id="MF_01113">
    <property type="entry name" value="DNApol_IV"/>
    <property type="match status" value="1"/>
</dbReference>
<dbReference type="InterPro" id="IPR043502">
    <property type="entry name" value="DNA/RNA_pol_sf"/>
</dbReference>
<dbReference type="InterPro" id="IPR036775">
    <property type="entry name" value="DNA_pol_Y-fam_lit_finger_sf"/>
</dbReference>
<dbReference type="InterPro" id="IPR017961">
    <property type="entry name" value="DNA_pol_Y-fam_little_finger"/>
</dbReference>
<dbReference type="InterPro" id="IPR050116">
    <property type="entry name" value="DNA_polymerase-Y"/>
</dbReference>
<dbReference type="InterPro" id="IPR022880">
    <property type="entry name" value="DNApol_IV"/>
</dbReference>
<dbReference type="InterPro" id="IPR053848">
    <property type="entry name" value="IMS_HHH_1"/>
</dbReference>
<dbReference type="InterPro" id="IPR043128">
    <property type="entry name" value="Rev_trsase/Diguanyl_cyclase"/>
</dbReference>
<dbReference type="InterPro" id="IPR001126">
    <property type="entry name" value="UmuC"/>
</dbReference>
<dbReference type="NCBIfam" id="NF002677">
    <property type="entry name" value="PRK02406.1"/>
    <property type="match status" value="1"/>
</dbReference>
<dbReference type="PANTHER" id="PTHR11076:SF33">
    <property type="entry name" value="DNA POLYMERASE KAPPA"/>
    <property type="match status" value="1"/>
</dbReference>
<dbReference type="PANTHER" id="PTHR11076">
    <property type="entry name" value="DNA REPAIR POLYMERASE UMUC / TRANSFERASE FAMILY MEMBER"/>
    <property type="match status" value="1"/>
</dbReference>
<dbReference type="Pfam" id="PF00817">
    <property type="entry name" value="IMS"/>
    <property type="match status" value="1"/>
</dbReference>
<dbReference type="Pfam" id="PF11799">
    <property type="entry name" value="IMS_C"/>
    <property type="match status" value="1"/>
</dbReference>
<dbReference type="Pfam" id="PF21999">
    <property type="entry name" value="IMS_HHH_1"/>
    <property type="match status" value="1"/>
</dbReference>
<dbReference type="SUPFAM" id="SSF56672">
    <property type="entry name" value="DNA/RNA polymerases"/>
    <property type="match status" value="1"/>
</dbReference>
<dbReference type="SUPFAM" id="SSF100879">
    <property type="entry name" value="Lesion bypass DNA polymerase (Y-family), little finger domain"/>
    <property type="match status" value="1"/>
</dbReference>
<dbReference type="PROSITE" id="PS50173">
    <property type="entry name" value="UMUC"/>
    <property type="match status" value="1"/>
</dbReference>
<proteinExistence type="inferred from homology"/>